<name>TRAP1_BOVIN</name>
<organism>
    <name type="scientific">Bos taurus</name>
    <name type="common">Bovine</name>
    <dbReference type="NCBI Taxonomy" id="9913"/>
    <lineage>
        <taxon>Eukaryota</taxon>
        <taxon>Metazoa</taxon>
        <taxon>Chordata</taxon>
        <taxon>Craniata</taxon>
        <taxon>Vertebrata</taxon>
        <taxon>Euteleostomi</taxon>
        <taxon>Mammalia</taxon>
        <taxon>Eutheria</taxon>
        <taxon>Laurasiatheria</taxon>
        <taxon>Artiodactyla</taxon>
        <taxon>Ruminantia</taxon>
        <taxon>Pecora</taxon>
        <taxon>Bovidae</taxon>
        <taxon>Bovinae</taxon>
        <taxon>Bos</taxon>
    </lineage>
</organism>
<sequence>MARELRMLLLWGRRLRAPALAAACGGKPVLCPWRPPAQSWGPPRSLASSFHVGRPFSSQAAEDQAEAGPLHSVISSLEAVQGSATKHEFQAETKKLLDIVARSLYSEKEVFIRELISNASDALEKLRHKLVSEGQALPDMEIHLQTDADRGTITIQDTGVGMSREELVSNLGTIARSGSKAFLDALQNQAEAGSKIIGQFGVGFYSAFMVADRVEVYSRSVDAGSLGYRWLSDGSGVFEVAEASGVRTGTKIIIHLKADSREFASEARVRDVVTKYSNFVSFPLYLNGRRMNTLQAIWMMDPKDVGEGQHEEFYRYVAQAHDRPRYTLHYRTDAPLSIRSIFYVPDAKPSMFDVSRELGSSVSLYSRKVLIQTKATNILPTWLRFVRGVVDSEDIPLNLSRELLQESALIRKLQGVLQQRLIKFFTDQSKKDAEKYARFFEDYGLFVREGIVTTAEQEVKEDIAKLLRYESSALPAGQLTSLSDYASRMQAGTRNIYYLCAPNRHLAEHSPYYEAMKRKNTEVLFCYEQFDELTLLHLREFDKKKLISVETDIVVDHYKEEKFEDGAPAGDCLSEKETEDLMAWMRNALGSRITDVKVTLRLDTHPAMITVLEMGAARHFLRMRQLAKTQEERAQLLQPTLEINPRHVLIKKLSQLRDSEPDLAQLLVDQIYENAMITAGLIDDPRPMVGRLNQLLVKALERH</sequence>
<reference key="1">
    <citation type="submission" date="2005-11" db="EMBL/GenBank/DDBJ databases">
        <authorList>
            <consortium name="NIH - Mammalian Gene Collection (MGC) project"/>
        </authorList>
    </citation>
    <scope>NUCLEOTIDE SEQUENCE [LARGE SCALE MRNA]</scope>
    <source>
        <strain>Crossbred X Angus</strain>
        <tissue>Liver</tissue>
    </source>
</reference>
<comment type="function">
    <text evidence="1">Chaperone that expresses an ATPase activity. Involved in maintaining mitochondrial function and polarization, downstream of PINK1 and mitochondrial complex I. Is a negative regulator of mitochondrial respiration able to modulate the balance between oxidative phosphorylation and aerobic glycolysis. The impact of TRAP1 on mitochondrial respiration is probably mediated by modulation of mitochondrial SRC and inhibition of SDHA.</text>
</comment>
<comment type="subunit">
    <text evidence="1">Binds to the intracellular domain of tumor necrosis factor type 1 receptor. Binds to RB1 (By similarity). Interacts with SRC (By similarity). Interacts with SDHA (By similarity).</text>
</comment>
<comment type="subcellular location">
    <subcellularLocation>
        <location evidence="1">Mitochondrion</location>
    </subcellularLocation>
    <subcellularLocation>
        <location evidence="1">Mitochondrion inner membrane</location>
    </subcellularLocation>
    <subcellularLocation>
        <location evidence="1">Mitochondrion matrix</location>
    </subcellularLocation>
</comment>
<comment type="similarity">
    <text evidence="5">Belongs to the heat shock protein 90 family.</text>
</comment>
<proteinExistence type="evidence at transcript level"/>
<protein>
    <recommendedName>
        <fullName>Heat shock protein 75 kDa, mitochondrial</fullName>
        <shortName>HSP 75</shortName>
    </recommendedName>
    <alternativeName>
        <fullName>TNFR-associated protein 1</fullName>
    </alternativeName>
    <alternativeName>
        <fullName>Tumor necrosis factor type 1 receptor-associated protein</fullName>
        <shortName>TRAP-1</shortName>
    </alternativeName>
</protein>
<accession>Q2TBI4</accession>
<evidence type="ECO:0000250" key="1"/>
<evidence type="ECO:0000250" key="2">
    <source>
        <dbReference type="UniProtKB" id="Q12931"/>
    </source>
</evidence>
<evidence type="ECO:0000250" key="3">
    <source>
        <dbReference type="UniProtKB" id="Q5XHZ0"/>
    </source>
</evidence>
<evidence type="ECO:0000250" key="4">
    <source>
        <dbReference type="UniProtKB" id="Q9CQN1"/>
    </source>
</evidence>
<evidence type="ECO:0000305" key="5"/>
<dbReference type="EMBL" id="BC110148">
    <property type="protein sequence ID" value="AAI10149.1"/>
    <property type="molecule type" value="mRNA"/>
</dbReference>
<dbReference type="RefSeq" id="NP_001033764.1">
    <property type="nucleotide sequence ID" value="NM_001038675.2"/>
</dbReference>
<dbReference type="SMR" id="Q2TBI4"/>
<dbReference type="BioGRID" id="171097">
    <property type="interactions" value="1"/>
</dbReference>
<dbReference type="FunCoup" id="Q2TBI4">
    <property type="interactions" value="2806"/>
</dbReference>
<dbReference type="STRING" id="9913.ENSBTAP00000073291"/>
<dbReference type="PaxDb" id="9913-ENSBTAP00000026786"/>
<dbReference type="PeptideAtlas" id="Q2TBI4"/>
<dbReference type="Ensembl" id="ENSBTAT00000026786.4">
    <property type="protein sequence ID" value="ENSBTAP00000026786.3"/>
    <property type="gene ID" value="ENSBTAG00000020109.5"/>
</dbReference>
<dbReference type="GeneID" id="514472"/>
<dbReference type="KEGG" id="bta:514472"/>
<dbReference type="CTD" id="10131"/>
<dbReference type="VEuPathDB" id="HostDB:ENSBTAG00000020109"/>
<dbReference type="VGNC" id="VGNC:36283">
    <property type="gene designation" value="TRAP1"/>
</dbReference>
<dbReference type="eggNOG" id="KOG0019">
    <property type="taxonomic scope" value="Eukaryota"/>
</dbReference>
<dbReference type="GeneTree" id="ENSGT01020000230401"/>
<dbReference type="HOGENOM" id="CLU_006684_3_1_1"/>
<dbReference type="InParanoid" id="Q2TBI4"/>
<dbReference type="OMA" id="DHTQQNE"/>
<dbReference type="OrthoDB" id="28737at2759"/>
<dbReference type="TreeFam" id="TF315234"/>
<dbReference type="Reactome" id="R-BTA-71403">
    <property type="pathway name" value="Citric acid cycle (TCA cycle)"/>
</dbReference>
<dbReference type="PRO" id="PR:Q2TBI4"/>
<dbReference type="Proteomes" id="UP000009136">
    <property type="component" value="Chromosome 25"/>
</dbReference>
<dbReference type="Bgee" id="ENSBTAG00000020109">
    <property type="expression patterns" value="Expressed in cardiac ventricle and 108 other cell types or tissues"/>
</dbReference>
<dbReference type="GO" id="GO:0005743">
    <property type="term" value="C:mitochondrial inner membrane"/>
    <property type="evidence" value="ECO:0000250"/>
    <property type="project" value="UniProtKB"/>
</dbReference>
<dbReference type="GO" id="GO:0005759">
    <property type="term" value="C:mitochondrial matrix"/>
    <property type="evidence" value="ECO:0000250"/>
    <property type="project" value="UniProtKB"/>
</dbReference>
<dbReference type="GO" id="GO:0005524">
    <property type="term" value="F:ATP binding"/>
    <property type="evidence" value="ECO:0000318"/>
    <property type="project" value="GO_Central"/>
</dbReference>
<dbReference type="GO" id="GO:0016887">
    <property type="term" value="F:ATP hydrolysis activity"/>
    <property type="evidence" value="ECO:0000318"/>
    <property type="project" value="GO_Central"/>
</dbReference>
<dbReference type="GO" id="GO:0140662">
    <property type="term" value="F:ATP-dependent protein folding chaperone"/>
    <property type="evidence" value="ECO:0007669"/>
    <property type="project" value="InterPro"/>
</dbReference>
<dbReference type="GO" id="GO:0019901">
    <property type="term" value="F:protein kinase binding"/>
    <property type="evidence" value="ECO:0000318"/>
    <property type="project" value="GO_Central"/>
</dbReference>
<dbReference type="GO" id="GO:0051082">
    <property type="term" value="F:unfolded protein binding"/>
    <property type="evidence" value="ECO:0000318"/>
    <property type="project" value="GO_Central"/>
</dbReference>
<dbReference type="GO" id="GO:1901856">
    <property type="term" value="P:negative regulation of cellular respiration"/>
    <property type="evidence" value="ECO:0000250"/>
    <property type="project" value="UniProtKB"/>
</dbReference>
<dbReference type="GO" id="GO:0006457">
    <property type="term" value="P:protein folding"/>
    <property type="evidence" value="ECO:0000318"/>
    <property type="project" value="GO_Central"/>
</dbReference>
<dbReference type="CDD" id="cd16927">
    <property type="entry name" value="HATPase_Hsp90-like"/>
    <property type="match status" value="1"/>
</dbReference>
<dbReference type="FunFam" id="1.20.120.790:FF:000004">
    <property type="entry name" value="Heat shock protein 75 kDa"/>
    <property type="match status" value="1"/>
</dbReference>
<dbReference type="FunFam" id="3.30.230.80:FF:000004">
    <property type="entry name" value="Heat shock protein 75 kDa"/>
    <property type="match status" value="1"/>
</dbReference>
<dbReference type="FunFam" id="3.30.565.10:FF:000021">
    <property type="entry name" value="Heat shock protein 75 kDa, mitochondrial"/>
    <property type="match status" value="1"/>
</dbReference>
<dbReference type="FunFam" id="3.40.50.11260:FF:000004">
    <property type="entry name" value="Heat shock protein 75 mitochondrial"/>
    <property type="match status" value="1"/>
</dbReference>
<dbReference type="Gene3D" id="3.30.230.80">
    <property type="match status" value="1"/>
</dbReference>
<dbReference type="Gene3D" id="3.40.50.11260">
    <property type="match status" value="1"/>
</dbReference>
<dbReference type="Gene3D" id="1.20.120.790">
    <property type="entry name" value="Heat shock protein 90, C-terminal domain"/>
    <property type="match status" value="1"/>
</dbReference>
<dbReference type="Gene3D" id="3.30.565.10">
    <property type="entry name" value="Histidine kinase-like ATPase, C-terminal domain"/>
    <property type="match status" value="1"/>
</dbReference>
<dbReference type="HAMAP" id="MF_00505">
    <property type="entry name" value="HSP90"/>
    <property type="match status" value="1"/>
</dbReference>
<dbReference type="InterPro" id="IPR036890">
    <property type="entry name" value="HATPase_C_sf"/>
</dbReference>
<dbReference type="InterPro" id="IPR037196">
    <property type="entry name" value="HSP90_C"/>
</dbReference>
<dbReference type="InterPro" id="IPR001404">
    <property type="entry name" value="Hsp90_fam"/>
</dbReference>
<dbReference type="InterPro" id="IPR020575">
    <property type="entry name" value="Hsp90_N"/>
</dbReference>
<dbReference type="InterPro" id="IPR020568">
    <property type="entry name" value="Ribosomal_Su5_D2-typ_SF"/>
</dbReference>
<dbReference type="NCBIfam" id="NF003555">
    <property type="entry name" value="PRK05218.1"/>
    <property type="match status" value="1"/>
</dbReference>
<dbReference type="PANTHER" id="PTHR11528">
    <property type="entry name" value="HEAT SHOCK PROTEIN 90 FAMILY MEMBER"/>
    <property type="match status" value="1"/>
</dbReference>
<dbReference type="Pfam" id="PF13589">
    <property type="entry name" value="HATPase_c_3"/>
    <property type="match status" value="1"/>
</dbReference>
<dbReference type="Pfam" id="PF00183">
    <property type="entry name" value="HSP90"/>
    <property type="match status" value="1"/>
</dbReference>
<dbReference type="PIRSF" id="PIRSF002583">
    <property type="entry name" value="Hsp90"/>
    <property type="match status" value="1"/>
</dbReference>
<dbReference type="PRINTS" id="PR00775">
    <property type="entry name" value="HEATSHOCK90"/>
</dbReference>
<dbReference type="SMART" id="SM00387">
    <property type="entry name" value="HATPase_c"/>
    <property type="match status" value="1"/>
</dbReference>
<dbReference type="SUPFAM" id="SSF55874">
    <property type="entry name" value="ATPase domain of HSP90 chaperone/DNA topoisomerase II/histidine kinase"/>
    <property type="match status" value="1"/>
</dbReference>
<dbReference type="SUPFAM" id="SSF110942">
    <property type="entry name" value="HSP90 C-terminal domain"/>
    <property type="match status" value="1"/>
</dbReference>
<dbReference type="SUPFAM" id="SSF54211">
    <property type="entry name" value="Ribosomal protein S5 domain 2-like"/>
    <property type="match status" value="1"/>
</dbReference>
<gene>
    <name type="primary">TRAP1</name>
    <name type="synonym">HSP75</name>
    <name evidence="2" type="synonym">HSPC5</name>
</gene>
<keyword id="KW-0007">Acetylation</keyword>
<keyword id="KW-0067">ATP-binding</keyword>
<keyword id="KW-0143">Chaperone</keyword>
<keyword id="KW-0472">Membrane</keyword>
<keyword id="KW-0496">Mitochondrion</keyword>
<keyword id="KW-0999">Mitochondrion inner membrane</keyword>
<keyword id="KW-0547">Nucleotide-binding</keyword>
<keyword id="KW-0597">Phosphoprotein</keyword>
<keyword id="KW-1185">Reference proteome</keyword>
<keyword id="KW-0809">Transit peptide</keyword>
<feature type="transit peptide" description="Mitochondrion" evidence="1">
    <location>
        <begin position="1"/>
        <end position="56"/>
    </location>
</feature>
<feature type="chain" id="PRO_0000245028" description="Heat shock protein 75 kDa, mitochondrial">
    <location>
        <begin position="57"/>
        <end position="703"/>
    </location>
</feature>
<feature type="binding site" evidence="1">
    <location>
        <position position="118"/>
    </location>
    <ligand>
        <name>ATP</name>
        <dbReference type="ChEBI" id="CHEBI:30616"/>
    </ligand>
</feature>
<feature type="binding site" evidence="1">
    <location>
        <position position="157"/>
    </location>
    <ligand>
        <name>ATP</name>
        <dbReference type="ChEBI" id="CHEBI:30616"/>
    </ligand>
</feature>
<feature type="binding site" evidence="1">
    <location>
        <position position="170"/>
    </location>
    <ligand>
        <name>ATP</name>
        <dbReference type="ChEBI" id="CHEBI:30616"/>
    </ligand>
</feature>
<feature type="binding site" evidence="1">
    <location>
        <position position="204"/>
    </location>
    <ligand>
        <name>ATP</name>
        <dbReference type="ChEBI" id="CHEBI:30616"/>
    </ligand>
</feature>
<feature type="binding site" evidence="1">
    <location>
        <position position="401"/>
    </location>
    <ligand>
        <name>ATP</name>
        <dbReference type="ChEBI" id="CHEBI:30616"/>
    </ligand>
</feature>
<feature type="modified residue" description="Phosphoserine" evidence="3">
    <location>
        <position position="169"/>
    </location>
</feature>
<feature type="modified residue" description="Phosphothreonine" evidence="3">
    <location>
        <position position="173"/>
    </location>
</feature>
<feature type="modified residue" description="N6-acetyllysine" evidence="2">
    <location>
        <position position="423"/>
    </location>
</feature>
<feature type="modified residue" description="N6-acetyllysine" evidence="4">
    <location>
        <position position="430"/>
    </location>
</feature>
<feature type="modified residue" description="N6-acetyllysine" evidence="2">
    <location>
        <position position="465"/>
    </location>
</feature>
<feature type="modified residue" description="Phosphothreonine" evidence="2">
    <location>
        <position position="493"/>
    </location>
</feature>